<dbReference type="EC" id="3.5.3.23" evidence="1"/>
<dbReference type="EMBL" id="CP001133">
    <property type="protein sequence ID" value="ACH63782.1"/>
    <property type="molecule type" value="Genomic_DNA"/>
</dbReference>
<dbReference type="RefSeq" id="WP_012534958.1">
    <property type="nucleotide sequence ID" value="NC_011186.1"/>
</dbReference>
<dbReference type="SMR" id="B5EV09"/>
<dbReference type="KEGG" id="vfm:VFMJ11_A0979"/>
<dbReference type="HOGENOM" id="CLU_053835_0_0_6"/>
<dbReference type="UniPathway" id="UPA00185">
    <property type="reaction ID" value="UER00280"/>
</dbReference>
<dbReference type="Proteomes" id="UP000001857">
    <property type="component" value="Chromosome II"/>
</dbReference>
<dbReference type="GO" id="GO:0009015">
    <property type="term" value="F:N-succinylarginine dihydrolase activity"/>
    <property type="evidence" value="ECO:0007669"/>
    <property type="project" value="UniProtKB-UniRule"/>
</dbReference>
<dbReference type="GO" id="GO:0019544">
    <property type="term" value="P:arginine catabolic process to glutamate"/>
    <property type="evidence" value="ECO:0007669"/>
    <property type="project" value="UniProtKB-UniRule"/>
</dbReference>
<dbReference type="GO" id="GO:0019545">
    <property type="term" value="P:arginine catabolic process to succinate"/>
    <property type="evidence" value="ECO:0007669"/>
    <property type="project" value="UniProtKB-UniRule"/>
</dbReference>
<dbReference type="Gene3D" id="3.75.10.20">
    <property type="entry name" value="Succinylarginine dihydrolase"/>
    <property type="match status" value="1"/>
</dbReference>
<dbReference type="HAMAP" id="MF_01172">
    <property type="entry name" value="AstB"/>
    <property type="match status" value="1"/>
</dbReference>
<dbReference type="InterPro" id="IPR037031">
    <property type="entry name" value="AstB_sf"/>
</dbReference>
<dbReference type="InterPro" id="IPR007079">
    <property type="entry name" value="SuccinylArg_d-Hdrlase_AstB"/>
</dbReference>
<dbReference type="NCBIfam" id="TIGR03241">
    <property type="entry name" value="arg_catab_astB"/>
    <property type="match status" value="1"/>
</dbReference>
<dbReference type="NCBIfam" id="NF009789">
    <property type="entry name" value="PRK13281.1"/>
    <property type="match status" value="1"/>
</dbReference>
<dbReference type="PANTHER" id="PTHR30420">
    <property type="entry name" value="N-SUCCINYLARGININE DIHYDROLASE"/>
    <property type="match status" value="1"/>
</dbReference>
<dbReference type="PANTHER" id="PTHR30420:SF2">
    <property type="entry name" value="N-SUCCINYLARGININE DIHYDROLASE"/>
    <property type="match status" value="1"/>
</dbReference>
<dbReference type="Pfam" id="PF04996">
    <property type="entry name" value="AstB"/>
    <property type="match status" value="1"/>
</dbReference>
<dbReference type="SUPFAM" id="SSF55909">
    <property type="entry name" value="Pentein"/>
    <property type="match status" value="1"/>
</dbReference>
<gene>
    <name evidence="1" type="primary">astB</name>
    <name type="ordered locus">VFMJ11_A0979</name>
</gene>
<accession>B5EV09</accession>
<keyword id="KW-0056">Arginine metabolism</keyword>
<keyword id="KW-0378">Hydrolase</keyword>
<sequence length="444" mass="49473">MKAVESNFDGLVGPTHNYSGLSVGNIASKSNQSGVSNPKQAVKQGLEKMKALHDMGFVQGVLAPQERPDIHTLRRLGFSGSDSEVLKKSYQYSPQLLAACSSASSMWTANAGTVSPSADTTDGKVHFTPANLINKFHRSIEDQVTGNILKATFSDEKHFVHHEALPHSDYFGDEGAANHTRFCREYGEQGVEFFVFGKSAFNESYLAPKKYPARQTLEASEAIARTHGLREQFTVFAQQNPDVIDRGVFHNDVIAVGNKNTLFCHQQAFLNQEKVKSDLCASYGSGFNVIEVPTDKVSVQDAVETYLFNSQLITKADGTTLIILPEHCRQNSRVWAYLNELIEQKRGIDELHTFDLKQSMQNGGGPACLRLRVVLNEAEQKAVNQHTLMSEELFTTLNLWADKHYRDRIEDKDLADSQLLVESRSALDELTQIMHLGSIYPFQK</sequence>
<feature type="chain" id="PRO_1000138032" description="N-succinylarginine dihydrolase">
    <location>
        <begin position="1"/>
        <end position="444"/>
    </location>
</feature>
<feature type="active site" evidence="1">
    <location>
        <position position="174"/>
    </location>
</feature>
<feature type="active site" evidence="1">
    <location>
        <position position="250"/>
    </location>
</feature>
<feature type="active site" description="Nucleophile" evidence="1">
    <location>
        <position position="368"/>
    </location>
</feature>
<feature type="binding site" evidence="1">
    <location>
        <begin position="19"/>
        <end position="28"/>
    </location>
    <ligand>
        <name>substrate</name>
    </ligand>
</feature>
<feature type="binding site" evidence="1">
    <location>
        <position position="110"/>
    </location>
    <ligand>
        <name>substrate</name>
    </ligand>
</feature>
<feature type="binding site" evidence="1">
    <location>
        <begin position="137"/>
        <end position="138"/>
    </location>
    <ligand>
        <name>substrate</name>
    </ligand>
</feature>
<feature type="binding site" evidence="1">
    <location>
        <position position="214"/>
    </location>
    <ligand>
        <name>substrate</name>
    </ligand>
</feature>
<feature type="binding site" evidence="1">
    <location>
        <position position="252"/>
    </location>
    <ligand>
        <name>substrate</name>
    </ligand>
</feature>
<feature type="binding site" evidence="1">
    <location>
        <position position="362"/>
    </location>
    <ligand>
        <name>substrate</name>
    </ligand>
</feature>
<proteinExistence type="inferred from homology"/>
<name>ASTB_ALIFM</name>
<evidence type="ECO:0000255" key="1">
    <source>
        <dbReference type="HAMAP-Rule" id="MF_01172"/>
    </source>
</evidence>
<comment type="function">
    <text evidence="1">Catalyzes the hydrolysis of N(2)-succinylarginine into N(2)-succinylornithine, ammonia and CO(2).</text>
</comment>
<comment type="catalytic activity">
    <reaction evidence="1">
        <text>N(2)-succinyl-L-arginine + 2 H2O + 2 H(+) = N(2)-succinyl-L-ornithine + 2 NH4(+) + CO2</text>
        <dbReference type="Rhea" id="RHEA:19533"/>
        <dbReference type="ChEBI" id="CHEBI:15377"/>
        <dbReference type="ChEBI" id="CHEBI:15378"/>
        <dbReference type="ChEBI" id="CHEBI:16526"/>
        <dbReference type="ChEBI" id="CHEBI:28938"/>
        <dbReference type="ChEBI" id="CHEBI:58241"/>
        <dbReference type="ChEBI" id="CHEBI:58514"/>
        <dbReference type="EC" id="3.5.3.23"/>
    </reaction>
</comment>
<comment type="pathway">
    <text evidence="1">Amino-acid degradation; L-arginine degradation via AST pathway; L-glutamate and succinate from L-arginine: step 2/5.</text>
</comment>
<comment type="subunit">
    <text evidence="1">Homodimer.</text>
</comment>
<comment type="similarity">
    <text evidence="1">Belongs to the succinylarginine dihydrolase family.</text>
</comment>
<protein>
    <recommendedName>
        <fullName evidence="1">N-succinylarginine dihydrolase</fullName>
        <ecNumber evidence="1">3.5.3.23</ecNumber>
    </recommendedName>
</protein>
<organism>
    <name type="scientific">Aliivibrio fischeri (strain MJ11)</name>
    <name type="common">Vibrio fischeri</name>
    <dbReference type="NCBI Taxonomy" id="388396"/>
    <lineage>
        <taxon>Bacteria</taxon>
        <taxon>Pseudomonadati</taxon>
        <taxon>Pseudomonadota</taxon>
        <taxon>Gammaproteobacteria</taxon>
        <taxon>Vibrionales</taxon>
        <taxon>Vibrionaceae</taxon>
        <taxon>Aliivibrio</taxon>
    </lineage>
</organism>
<reference key="1">
    <citation type="submission" date="2008-08" db="EMBL/GenBank/DDBJ databases">
        <title>Complete sequence of Vibrio fischeri strain MJ11.</title>
        <authorList>
            <person name="Mandel M.J."/>
            <person name="Stabb E.V."/>
            <person name="Ruby E.G."/>
            <person name="Ferriera S."/>
            <person name="Johnson J."/>
            <person name="Kravitz S."/>
            <person name="Beeson K."/>
            <person name="Sutton G."/>
            <person name="Rogers Y.-H."/>
            <person name="Friedman R."/>
            <person name="Frazier M."/>
            <person name="Venter J.C."/>
        </authorList>
    </citation>
    <scope>NUCLEOTIDE SEQUENCE [LARGE SCALE GENOMIC DNA]</scope>
    <source>
        <strain>MJ11</strain>
    </source>
</reference>